<keyword id="KW-0687">Ribonucleoprotein</keyword>
<keyword id="KW-0689">Ribosomal protein</keyword>
<keyword id="KW-0694">RNA-binding</keyword>
<keyword id="KW-0699">rRNA-binding</keyword>
<proteinExistence type="inferred from homology"/>
<organism>
    <name type="scientific">Coxiella burnetii (strain CbuK_Q154)</name>
    <name type="common">Coxiella burnetii (strain Q154)</name>
    <dbReference type="NCBI Taxonomy" id="434924"/>
    <lineage>
        <taxon>Bacteria</taxon>
        <taxon>Pseudomonadati</taxon>
        <taxon>Pseudomonadota</taxon>
        <taxon>Gammaproteobacteria</taxon>
        <taxon>Legionellales</taxon>
        <taxon>Coxiellaceae</taxon>
        <taxon>Coxiella</taxon>
    </lineage>
</organism>
<accession>B6J5C0</accession>
<feature type="chain" id="PRO_1000120941" description="Large ribosomal subunit protein uL10">
    <location>
        <begin position="1"/>
        <end position="174"/>
    </location>
</feature>
<protein>
    <recommendedName>
        <fullName evidence="1">Large ribosomal subunit protein uL10</fullName>
    </recommendedName>
    <alternativeName>
        <fullName evidence="2">50S ribosomal protein L10</fullName>
    </alternativeName>
</protein>
<reference key="1">
    <citation type="journal article" date="2009" name="Infect. Immun.">
        <title>Comparative genomics reveal extensive transposon-mediated genomic plasticity and diversity among potential effector proteins within the genus Coxiella.</title>
        <authorList>
            <person name="Beare P.A."/>
            <person name="Unsworth N."/>
            <person name="Andoh M."/>
            <person name="Voth D.E."/>
            <person name="Omsland A."/>
            <person name="Gilk S.D."/>
            <person name="Williams K.P."/>
            <person name="Sobral B.W."/>
            <person name="Kupko J.J. III"/>
            <person name="Porcella S.F."/>
            <person name="Samuel J.E."/>
            <person name="Heinzen R.A."/>
        </authorList>
    </citation>
    <scope>NUCLEOTIDE SEQUENCE [LARGE SCALE GENOMIC DNA]</scope>
    <source>
        <strain>CbuK_Q154</strain>
    </source>
</reference>
<name>RL10_COXB1</name>
<dbReference type="EMBL" id="CP001020">
    <property type="protein sequence ID" value="ACJ19704.1"/>
    <property type="molecule type" value="Genomic_DNA"/>
</dbReference>
<dbReference type="RefSeq" id="WP_005771616.1">
    <property type="nucleotide sequence ID" value="NC_011528.1"/>
</dbReference>
<dbReference type="SMR" id="B6J5C0"/>
<dbReference type="KEGG" id="cbc:CbuK_0421"/>
<dbReference type="HOGENOM" id="CLU_092227_0_1_6"/>
<dbReference type="GO" id="GO:0015934">
    <property type="term" value="C:large ribosomal subunit"/>
    <property type="evidence" value="ECO:0007669"/>
    <property type="project" value="InterPro"/>
</dbReference>
<dbReference type="GO" id="GO:0070180">
    <property type="term" value="F:large ribosomal subunit rRNA binding"/>
    <property type="evidence" value="ECO:0007669"/>
    <property type="project" value="UniProtKB-UniRule"/>
</dbReference>
<dbReference type="GO" id="GO:0003735">
    <property type="term" value="F:structural constituent of ribosome"/>
    <property type="evidence" value="ECO:0007669"/>
    <property type="project" value="InterPro"/>
</dbReference>
<dbReference type="GO" id="GO:0006412">
    <property type="term" value="P:translation"/>
    <property type="evidence" value="ECO:0007669"/>
    <property type="project" value="UniProtKB-UniRule"/>
</dbReference>
<dbReference type="CDD" id="cd05797">
    <property type="entry name" value="Ribosomal_L10"/>
    <property type="match status" value="1"/>
</dbReference>
<dbReference type="Gene3D" id="3.30.70.1730">
    <property type="match status" value="1"/>
</dbReference>
<dbReference type="Gene3D" id="6.10.250.290">
    <property type="match status" value="1"/>
</dbReference>
<dbReference type="HAMAP" id="MF_00362">
    <property type="entry name" value="Ribosomal_uL10"/>
    <property type="match status" value="1"/>
</dbReference>
<dbReference type="InterPro" id="IPR001790">
    <property type="entry name" value="Ribosomal_uL10"/>
</dbReference>
<dbReference type="InterPro" id="IPR043141">
    <property type="entry name" value="Ribosomal_uL10-like_sf"/>
</dbReference>
<dbReference type="InterPro" id="IPR022973">
    <property type="entry name" value="Ribosomal_uL10_bac"/>
</dbReference>
<dbReference type="InterPro" id="IPR047865">
    <property type="entry name" value="Ribosomal_uL10_bac_type"/>
</dbReference>
<dbReference type="InterPro" id="IPR002363">
    <property type="entry name" value="Ribosomal_uL10_CS_bac"/>
</dbReference>
<dbReference type="NCBIfam" id="NF000955">
    <property type="entry name" value="PRK00099.1-1"/>
    <property type="match status" value="1"/>
</dbReference>
<dbReference type="PANTHER" id="PTHR11560">
    <property type="entry name" value="39S RIBOSOMAL PROTEIN L10, MITOCHONDRIAL"/>
    <property type="match status" value="1"/>
</dbReference>
<dbReference type="Pfam" id="PF00466">
    <property type="entry name" value="Ribosomal_L10"/>
    <property type="match status" value="1"/>
</dbReference>
<dbReference type="SUPFAM" id="SSF160369">
    <property type="entry name" value="Ribosomal protein L10-like"/>
    <property type="match status" value="1"/>
</dbReference>
<dbReference type="PROSITE" id="PS01109">
    <property type="entry name" value="RIBOSOMAL_L10"/>
    <property type="match status" value="1"/>
</dbReference>
<comment type="function">
    <text evidence="1">Forms part of the ribosomal stalk, playing a central role in the interaction of the ribosome with GTP-bound translation factors.</text>
</comment>
<comment type="subunit">
    <text evidence="1">Part of the ribosomal stalk of the 50S ribosomal subunit. The N-terminus interacts with L11 and the large rRNA to form the base of the stalk. The C-terminus forms an elongated spine to which L12 dimers bind in a sequential fashion forming a multimeric L10(L12)X complex.</text>
</comment>
<comment type="similarity">
    <text evidence="1">Belongs to the universal ribosomal protein uL10 family.</text>
</comment>
<sequence>MALNLEQKKAMVAEITDIANQAVSAVAADYRGLTVSEMSDLRKSAREARVHMRVYRNTLARRAFKETTYACLEEVLTGPIVLFFSQEEPGAAARLIEKFIKEHERLEVKGLALGGELLPAEKLKAVARLPSREEALSQLAAVLLAPVTKLVRTLNEPIAQVARVMAAVRDQKAA</sequence>
<evidence type="ECO:0000255" key="1">
    <source>
        <dbReference type="HAMAP-Rule" id="MF_00362"/>
    </source>
</evidence>
<evidence type="ECO:0000305" key="2"/>
<gene>
    <name evidence="1" type="primary">rplJ</name>
    <name type="ordered locus">CbuK_0421</name>
</gene>